<comment type="function">
    <text evidence="1">The beta subunit is responsible for the synthesis of L-tryptophan from indole and L-serine.</text>
</comment>
<comment type="catalytic activity">
    <reaction evidence="1">
        <text>(1S,2R)-1-C-(indol-3-yl)glycerol 3-phosphate + L-serine = D-glyceraldehyde 3-phosphate + L-tryptophan + H2O</text>
        <dbReference type="Rhea" id="RHEA:10532"/>
        <dbReference type="ChEBI" id="CHEBI:15377"/>
        <dbReference type="ChEBI" id="CHEBI:33384"/>
        <dbReference type="ChEBI" id="CHEBI:57912"/>
        <dbReference type="ChEBI" id="CHEBI:58866"/>
        <dbReference type="ChEBI" id="CHEBI:59776"/>
        <dbReference type="EC" id="4.2.1.20"/>
    </reaction>
</comment>
<comment type="cofactor">
    <cofactor evidence="1">
        <name>pyridoxal 5'-phosphate</name>
        <dbReference type="ChEBI" id="CHEBI:597326"/>
    </cofactor>
</comment>
<comment type="pathway">
    <text evidence="1">Amino-acid biosynthesis; L-tryptophan biosynthesis; L-tryptophan from chorismate: step 5/5.</text>
</comment>
<comment type="subunit">
    <text evidence="1">Tetramer of two alpha and two beta chains.</text>
</comment>
<comment type="similarity">
    <text evidence="1">Belongs to the TrpB family.</text>
</comment>
<sequence length="418" mass="44847">MTSTLPTANTPDPASLMPSVRPEAHGRYGRYGGQYVPETLMPALAELEQAAAEAWKDSAFTTELNRLLKSYVGRATPLYEAERLSAHYRRSDGGPRIWLKREDLNHTGAHKINNALGQALLALRMGKKRIIAETGAGQHGVATATVCARFGLECVVYMGAEDMRRQALNVFRMRLLGATVQAVTAGTATLKDATSEAIRDWVTNVETTHYILGSVAGPHPYPMLVRDFHAVIGNEAREQCKESFGRLPDVLLACVGGGSNAMGLFHPFVQDTSVRLIGVEAAGDGVATGRHAATITEGRVGVLHGAMSLLLQDQDGQVQEAHSISAGLDYPGVGPEHSYLRDIGRAEYGAVTDDEAITALRLVSELEGIIPALETAHAFAWLEMLCPTLPNGSEIVINCSGRGDKDVNTVAEKLGNQL</sequence>
<evidence type="ECO:0000255" key="1">
    <source>
        <dbReference type="HAMAP-Rule" id="MF_00133"/>
    </source>
</evidence>
<evidence type="ECO:0000256" key="2">
    <source>
        <dbReference type="SAM" id="MobiDB-lite"/>
    </source>
</evidence>
<organism>
    <name type="scientific">Synechococcus sp. (strain CC9311)</name>
    <dbReference type="NCBI Taxonomy" id="64471"/>
    <lineage>
        <taxon>Bacteria</taxon>
        <taxon>Bacillati</taxon>
        <taxon>Cyanobacteriota</taxon>
        <taxon>Cyanophyceae</taxon>
        <taxon>Synechococcales</taxon>
        <taxon>Synechococcaceae</taxon>
        <taxon>Synechococcus</taxon>
    </lineage>
</organism>
<keyword id="KW-0028">Amino-acid biosynthesis</keyword>
<keyword id="KW-0057">Aromatic amino acid biosynthesis</keyword>
<keyword id="KW-0456">Lyase</keyword>
<keyword id="KW-0663">Pyridoxal phosphate</keyword>
<keyword id="KW-1185">Reference proteome</keyword>
<keyword id="KW-0822">Tryptophan biosynthesis</keyword>
<dbReference type="EC" id="4.2.1.20" evidence="1"/>
<dbReference type="EMBL" id="CP000435">
    <property type="protein sequence ID" value="ABI47738.1"/>
    <property type="molecule type" value="Genomic_DNA"/>
</dbReference>
<dbReference type="RefSeq" id="WP_011620525.1">
    <property type="nucleotide sequence ID" value="NC_008319.1"/>
</dbReference>
<dbReference type="SMR" id="Q0I6V1"/>
<dbReference type="STRING" id="64471.sync_2633"/>
<dbReference type="KEGG" id="syg:sync_2633"/>
<dbReference type="eggNOG" id="COG0133">
    <property type="taxonomic scope" value="Bacteria"/>
</dbReference>
<dbReference type="HOGENOM" id="CLU_016734_3_1_3"/>
<dbReference type="OrthoDB" id="9766131at2"/>
<dbReference type="UniPathway" id="UPA00035">
    <property type="reaction ID" value="UER00044"/>
</dbReference>
<dbReference type="Proteomes" id="UP000001961">
    <property type="component" value="Chromosome"/>
</dbReference>
<dbReference type="GO" id="GO:0005737">
    <property type="term" value="C:cytoplasm"/>
    <property type="evidence" value="ECO:0007669"/>
    <property type="project" value="TreeGrafter"/>
</dbReference>
<dbReference type="GO" id="GO:0004834">
    <property type="term" value="F:tryptophan synthase activity"/>
    <property type="evidence" value="ECO:0007669"/>
    <property type="project" value="UniProtKB-UniRule"/>
</dbReference>
<dbReference type="CDD" id="cd06446">
    <property type="entry name" value="Trp-synth_B"/>
    <property type="match status" value="1"/>
</dbReference>
<dbReference type="FunFam" id="3.40.50.1100:FF:000001">
    <property type="entry name" value="Tryptophan synthase beta chain"/>
    <property type="match status" value="1"/>
</dbReference>
<dbReference type="FunFam" id="3.40.50.1100:FF:000004">
    <property type="entry name" value="Tryptophan synthase beta chain"/>
    <property type="match status" value="1"/>
</dbReference>
<dbReference type="Gene3D" id="3.40.50.1100">
    <property type="match status" value="2"/>
</dbReference>
<dbReference type="HAMAP" id="MF_00133">
    <property type="entry name" value="Trp_synth_beta"/>
    <property type="match status" value="1"/>
</dbReference>
<dbReference type="InterPro" id="IPR006653">
    <property type="entry name" value="Trp_synth_b_CS"/>
</dbReference>
<dbReference type="InterPro" id="IPR006654">
    <property type="entry name" value="Trp_synth_beta"/>
</dbReference>
<dbReference type="InterPro" id="IPR023026">
    <property type="entry name" value="Trp_synth_beta/beta-like"/>
</dbReference>
<dbReference type="InterPro" id="IPR001926">
    <property type="entry name" value="TrpB-like_PALP"/>
</dbReference>
<dbReference type="InterPro" id="IPR036052">
    <property type="entry name" value="TrpB-like_PALP_sf"/>
</dbReference>
<dbReference type="NCBIfam" id="TIGR00263">
    <property type="entry name" value="trpB"/>
    <property type="match status" value="1"/>
</dbReference>
<dbReference type="PANTHER" id="PTHR48077:SF3">
    <property type="entry name" value="TRYPTOPHAN SYNTHASE"/>
    <property type="match status" value="1"/>
</dbReference>
<dbReference type="PANTHER" id="PTHR48077">
    <property type="entry name" value="TRYPTOPHAN SYNTHASE-RELATED"/>
    <property type="match status" value="1"/>
</dbReference>
<dbReference type="Pfam" id="PF00291">
    <property type="entry name" value="PALP"/>
    <property type="match status" value="1"/>
</dbReference>
<dbReference type="PIRSF" id="PIRSF001413">
    <property type="entry name" value="Trp_syn_beta"/>
    <property type="match status" value="1"/>
</dbReference>
<dbReference type="SUPFAM" id="SSF53686">
    <property type="entry name" value="Tryptophan synthase beta subunit-like PLP-dependent enzymes"/>
    <property type="match status" value="1"/>
</dbReference>
<dbReference type="PROSITE" id="PS00168">
    <property type="entry name" value="TRP_SYNTHASE_BETA"/>
    <property type="match status" value="1"/>
</dbReference>
<feature type="chain" id="PRO_1000018414" description="Tryptophan synthase beta chain">
    <location>
        <begin position="1"/>
        <end position="418"/>
    </location>
</feature>
<feature type="region of interest" description="Disordered" evidence="2">
    <location>
        <begin position="1"/>
        <end position="21"/>
    </location>
</feature>
<feature type="compositionally biased region" description="Polar residues" evidence="2">
    <location>
        <begin position="1"/>
        <end position="12"/>
    </location>
</feature>
<feature type="modified residue" description="N6-(pyridoxal phosphate)lysine" evidence="1">
    <location>
        <position position="111"/>
    </location>
</feature>
<accession>Q0I6V1</accession>
<name>TRPB_SYNS3</name>
<reference key="1">
    <citation type="journal article" date="2006" name="Proc. Natl. Acad. Sci. U.S.A.">
        <title>Genome sequence of Synechococcus CC9311: insights into adaptation to a coastal environment.</title>
        <authorList>
            <person name="Palenik B."/>
            <person name="Ren Q."/>
            <person name="Dupont C.L."/>
            <person name="Myers G.S."/>
            <person name="Heidelberg J.F."/>
            <person name="Badger J.H."/>
            <person name="Madupu R."/>
            <person name="Nelson W.C."/>
            <person name="Brinkac L.M."/>
            <person name="Dodson R.J."/>
            <person name="Durkin A.S."/>
            <person name="Daugherty S.C."/>
            <person name="Sullivan S.A."/>
            <person name="Khouri H."/>
            <person name="Mohamoud Y."/>
            <person name="Halpin R."/>
            <person name="Paulsen I.T."/>
        </authorList>
    </citation>
    <scope>NUCLEOTIDE SEQUENCE [LARGE SCALE GENOMIC DNA]</scope>
    <source>
        <strain>CC9311</strain>
    </source>
</reference>
<protein>
    <recommendedName>
        <fullName evidence="1">Tryptophan synthase beta chain</fullName>
        <ecNumber evidence="1">4.2.1.20</ecNumber>
    </recommendedName>
</protein>
<proteinExistence type="inferred from homology"/>
<gene>
    <name evidence="1" type="primary">trpB</name>
    <name type="ordered locus">sync_2633</name>
</gene>